<name>PPR6_ARATH</name>
<organism>
    <name type="scientific">Arabidopsis thaliana</name>
    <name type="common">Mouse-ear cress</name>
    <dbReference type="NCBI Taxonomy" id="3702"/>
    <lineage>
        <taxon>Eukaryota</taxon>
        <taxon>Viridiplantae</taxon>
        <taxon>Streptophyta</taxon>
        <taxon>Embryophyta</taxon>
        <taxon>Tracheophyta</taxon>
        <taxon>Spermatophyta</taxon>
        <taxon>Magnoliopsida</taxon>
        <taxon>eudicotyledons</taxon>
        <taxon>Gunneridae</taxon>
        <taxon>Pentapetalae</taxon>
        <taxon>rosids</taxon>
        <taxon>malvids</taxon>
        <taxon>Brassicales</taxon>
        <taxon>Brassicaceae</taxon>
        <taxon>Camelineae</taxon>
        <taxon>Arabidopsis</taxon>
    </lineage>
</organism>
<feature type="transit peptide" description="Mitochondrion" evidence="1">
    <location>
        <begin position="1"/>
        <end position="87"/>
    </location>
</feature>
<feature type="chain" id="PRO_0000342747" description="Pentatricopeptide repeat-containing protein At1g03100, mitochondrial">
    <location>
        <begin position="88"/>
        <end position="793"/>
    </location>
</feature>
<feature type="repeat" description="PPR 1">
    <location>
        <begin position="257"/>
        <end position="291"/>
    </location>
</feature>
<feature type="repeat" description="PPR 2">
    <location>
        <begin position="292"/>
        <end position="322"/>
    </location>
</feature>
<feature type="repeat" description="PPR 3">
    <location>
        <begin position="330"/>
        <end position="364"/>
    </location>
</feature>
<feature type="repeat" description="PPR 4">
    <location>
        <begin position="458"/>
        <end position="492"/>
    </location>
</feature>
<feature type="repeat" description="PPR 5">
    <location>
        <begin position="495"/>
        <end position="529"/>
    </location>
</feature>
<feature type="repeat" description="PPR 6">
    <location>
        <begin position="530"/>
        <end position="564"/>
    </location>
</feature>
<feature type="repeat" description="PPR 7">
    <location>
        <begin position="565"/>
        <end position="599"/>
    </location>
</feature>
<feature type="repeat" description="PPR 8">
    <location>
        <begin position="601"/>
        <end position="631"/>
    </location>
</feature>
<feature type="repeat" description="PPR 9">
    <location>
        <begin position="637"/>
        <end position="671"/>
    </location>
</feature>
<feature type="repeat" description="PPR 10">
    <location>
        <begin position="672"/>
        <end position="707"/>
    </location>
</feature>
<feature type="repeat" description="PPR 11">
    <location>
        <begin position="713"/>
        <end position="747"/>
    </location>
</feature>
<gene>
    <name type="ordered locus">At1g03100</name>
    <name type="ORF">F10O3.8</name>
</gene>
<evidence type="ECO:0000255" key="1"/>
<evidence type="ECO:0000305" key="2"/>
<sequence length="793" mass="89239">MFSLRKTKLQPVSLHQCRLSSLFRGVLIHAIEVTGTQSQASLQHGLAGKAVLSNAKYLSVLTRFRTSTRFDVWSIHRREAISSISGSILLQARDPAKLNEEIQIAVDEHRCDEAWRLFEQHMQMEGFPRKSVVNNVVVCFAESLDSNWLQKGYSLVEQAYEEGKQNLLEKEPLLYLSLALAKSGMAVPASTILRKLVETEEYPHVSAWSAVLAHMSLAGSGSYLSAELVLEIGYLFHNNRVDPRKKSNAPLLAMKPNTQVLNVALAGCLLFGTTRKAEQLLDMIPKIGVKADANLLVIMAHIYERNGRREELRKLQRHIDEACNLNESQFWQFYNCLLMCHLKFGDLESASKMVLEMLRRGKVARNSLGAAILEFDTADDGRLYTKRVSGKGSEVKEHDNPETRVVSIHSMIPYDEFSRDRKFLKLEAEAKDVLGALLAKLHVQVELITSERGVLQPTEEIYVKLAKAFLESGKMKELAKFLLKAEHEDSPVSSDNSMLINVINACISLGMLDQAHDLLDEMRMAGVRTGSSVYSSLLKAYCNTNQTREVTSLLRDAQKAGIQLDSSCYEALIQSQVIQNDTHGALNVFKEMKEAKILRGGNQKFEKLLKGCEGNAEAGLMSKLLREIREVQSLDAGVHDWNNVIHFFSKKGLMQDAEKALKRMRSLGHSPNAQTFHSMVTGYAAIGSKYTEVTELWGEMKSIAAATSSMKFDQELLDAVLYTFVRGGFFSRANEVVEMMEKKNMFVDKYKYRMLFLKYHKTAYKGKAPKVQSESQLKKREAGLVFKKWLGLS</sequence>
<protein>
    <recommendedName>
        <fullName>Pentatricopeptide repeat-containing protein At1g03100, mitochondrial</fullName>
    </recommendedName>
</protein>
<proteinExistence type="evidence at transcript level"/>
<comment type="subcellular location">
    <subcellularLocation>
        <location evidence="2">Mitochondrion</location>
    </subcellularLocation>
</comment>
<comment type="similarity">
    <text evidence="2">Belongs to the PPR family. P subfamily.</text>
</comment>
<comment type="online information" name="Pentatricopeptide repeat proteins">
    <link uri="https://ppr.plantenergy.uwa.edu.au"/>
</comment>
<keyword id="KW-0496">Mitochondrion</keyword>
<keyword id="KW-1185">Reference proteome</keyword>
<keyword id="KW-0677">Repeat</keyword>
<keyword id="KW-0809">Transit peptide</keyword>
<dbReference type="EMBL" id="AC006550">
    <property type="protein sequence ID" value="AAD25799.1"/>
    <property type="molecule type" value="Genomic_DNA"/>
</dbReference>
<dbReference type="EMBL" id="CP002684">
    <property type="protein sequence ID" value="AEE27529.1"/>
    <property type="molecule type" value="Genomic_DNA"/>
</dbReference>
<dbReference type="EMBL" id="BT011694">
    <property type="protein sequence ID" value="AAS49057.1"/>
    <property type="molecule type" value="mRNA"/>
</dbReference>
<dbReference type="PIR" id="H86161">
    <property type="entry name" value="H86161"/>
</dbReference>
<dbReference type="RefSeq" id="NP_171809.1">
    <property type="nucleotide sequence ID" value="NM_100192.2"/>
</dbReference>
<dbReference type="SMR" id="Q9SA60"/>
<dbReference type="FunCoup" id="Q9SA60">
    <property type="interactions" value="109"/>
</dbReference>
<dbReference type="STRING" id="3702.Q9SA60"/>
<dbReference type="iPTMnet" id="Q9SA60"/>
<dbReference type="PaxDb" id="3702-AT1G03100.1"/>
<dbReference type="ProteomicsDB" id="226400"/>
<dbReference type="EnsemblPlants" id="AT1G03100.1">
    <property type="protein sequence ID" value="AT1G03100.1"/>
    <property type="gene ID" value="AT1G03100"/>
</dbReference>
<dbReference type="GeneID" id="839573"/>
<dbReference type="Gramene" id="AT1G03100.1">
    <property type="protein sequence ID" value="AT1G03100.1"/>
    <property type="gene ID" value="AT1G03100"/>
</dbReference>
<dbReference type="KEGG" id="ath:AT1G03100"/>
<dbReference type="Araport" id="AT1G03100"/>
<dbReference type="TAIR" id="AT1G03100"/>
<dbReference type="eggNOG" id="ENOG502QVPW">
    <property type="taxonomic scope" value="Eukaryota"/>
</dbReference>
<dbReference type="HOGENOM" id="CLU_008969_0_1_1"/>
<dbReference type="InParanoid" id="Q9SA60"/>
<dbReference type="OMA" id="AYCKEGH"/>
<dbReference type="PhylomeDB" id="Q9SA60"/>
<dbReference type="PRO" id="PR:Q9SA60"/>
<dbReference type="Proteomes" id="UP000006548">
    <property type="component" value="Chromosome 1"/>
</dbReference>
<dbReference type="ExpressionAtlas" id="Q9SA60">
    <property type="expression patterns" value="baseline and differential"/>
</dbReference>
<dbReference type="GO" id="GO:0005739">
    <property type="term" value="C:mitochondrion"/>
    <property type="evidence" value="ECO:0007669"/>
    <property type="project" value="UniProtKB-SubCell"/>
</dbReference>
<dbReference type="Gene3D" id="1.25.40.10">
    <property type="entry name" value="Tetratricopeptide repeat domain"/>
    <property type="match status" value="3"/>
</dbReference>
<dbReference type="InterPro" id="IPR002885">
    <property type="entry name" value="Pentatricopeptide_rpt"/>
</dbReference>
<dbReference type="InterPro" id="IPR011990">
    <property type="entry name" value="TPR-like_helical_dom_sf"/>
</dbReference>
<dbReference type="NCBIfam" id="TIGR00756">
    <property type="entry name" value="PPR"/>
    <property type="match status" value="2"/>
</dbReference>
<dbReference type="PANTHER" id="PTHR46598">
    <property type="entry name" value="BNAC05G43320D PROTEIN"/>
    <property type="match status" value="1"/>
</dbReference>
<dbReference type="PANTHER" id="PTHR46598:SF1">
    <property type="entry name" value="OS10G0422566 PROTEIN"/>
    <property type="match status" value="1"/>
</dbReference>
<dbReference type="Pfam" id="PF01535">
    <property type="entry name" value="PPR"/>
    <property type="match status" value="2"/>
</dbReference>
<dbReference type="Pfam" id="PF13041">
    <property type="entry name" value="PPR_2"/>
    <property type="match status" value="1"/>
</dbReference>
<dbReference type="Pfam" id="PF13812">
    <property type="entry name" value="PPR_3"/>
    <property type="match status" value="1"/>
</dbReference>
<dbReference type="Pfam" id="PF25245">
    <property type="entry name" value="TPR_At1g68980"/>
    <property type="match status" value="1"/>
</dbReference>
<dbReference type="PROSITE" id="PS51375">
    <property type="entry name" value="PPR"/>
    <property type="match status" value="10"/>
</dbReference>
<accession>Q9SA60</accession>
<reference key="1">
    <citation type="journal article" date="2000" name="Nature">
        <title>Sequence and analysis of chromosome 1 of the plant Arabidopsis thaliana.</title>
        <authorList>
            <person name="Theologis A."/>
            <person name="Ecker J.R."/>
            <person name="Palm C.J."/>
            <person name="Federspiel N.A."/>
            <person name="Kaul S."/>
            <person name="White O."/>
            <person name="Alonso J."/>
            <person name="Altafi H."/>
            <person name="Araujo R."/>
            <person name="Bowman C.L."/>
            <person name="Brooks S.Y."/>
            <person name="Buehler E."/>
            <person name="Chan A."/>
            <person name="Chao Q."/>
            <person name="Chen H."/>
            <person name="Cheuk R.F."/>
            <person name="Chin C.W."/>
            <person name="Chung M.K."/>
            <person name="Conn L."/>
            <person name="Conway A.B."/>
            <person name="Conway A.R."/>
            <person name="Creasy T.H."/>
            <person name="Dewar K."/>
            <person name="Dunn P."/>
            <person name="Etgu P."/>
            <person name="Feldblyum T.V."/>
            <person name="Feng J.-D."/>
            <person name="Fong B."/>
            <person name="Fujii C.Y."/>
            <person name="Gill J.E."/>
            <person name="Goldsmith A.D."/>
            <person name="Haas B."/>
            <person name="Hansen N.F."/>
            <person name="Hughes B."/>
            <person name="Huizar L."/>
            <person name="Hunter J.L."/>
            <person name="Jenkins J."/>
            <person name="Johnson-Hopson C."/>
            <person name="Khan S."/>
            <person name="Khaykin E."/>
            <person name="Kim C.J."/>
            <person name="Koo H.L."/>
            <person name="Kremenetskaia I."/>
            <person name="Kurtz D.B."/>
            <person name="Kwan A."/>
            <person name="Lam B."/>
            <person name="Langin-Hooper S."/>
            <person name="Lee A."/>
            <person name="Lee J.M."/>
            <person name="Lenz C.A."/>
            <person name="Li J.H."/>
            <person name="Li Y.-P."/>
            <person name="Lin X."/>
            <person name="Liu S.X."/>
            <person name="Liu Z.A."/>
            <person name="Luros J.S."/>
            <person name="Maiti R."/>
            <person name="Marziali A."/>
            <person name="Militscher J."/>
            <person name="Miranda M."/>
            <person name="Nguyen M."/>
            <person name="Nierman W.C."/>
            <person name="Osborne B.I."/>
            <person name="Pai G."/>
            <person name="Peterson J."/>
            <person name="Pham P.K."/>
            <person name="Rizzo M."/>
            <person name="Rooney T."/>
            <person name="Rowley D."/>
            <person name="Sakano H."/>
            <person name="Salzberg S.L."/>
            <person name="Schwartz J.R."/>
            <person name="Shinn P."/>
            <person name="Southwick A.M."/>
            <person name="Sun H."/>
            <person name="Tallon L.J."/>
            <person name="Tambunga G."/>
            <person name="Toriumi M.J."/>
            <person name="Town C.D."/>
            <person name="Utterback T."/>
            <person name="Van Aken S."/>
            <person name="Vaysberg M."/>
            <person name="Vysotskaia V.S."/>
            <person name="Walker M."/>
            <person name="Wu D."/>
            <person name="Yu G."/>
            <person name="Fraser C.M."/>
            <person name="Venter J.C."/>
            <person name="Davis R.W."/>
        </authorList>
    </citation>
    <scope>NUCLEOTIDE SEQUENCE [LARGE SCALE GENOMIC DNA]</scope>
    <source>
        <strain>cv. Columbia</strain>
    </source>
</reference>
<reference key="2">
    <citation type="journal article" date="2017" name="Plant J.">
        <title>Araport11: a complete reannotation of the Arabidopsis thaliana reference genome.</title>
        <authorList>
            <person name="Cheng C.Y."/>
            <person name="Krishnakumar V."/>
            <person name="Chan A.P."/>
            <person name="Thibaud-Nissen F."/>
            <person name="Schobel S."/>
            <person name="Town C.D."/>
        </authorList>
    </citation>
    <scope>GENOME REANNOTATION</scope>
    <source>
        <strain>cv. Columbia</strain>
    </source>
</reference>
<reference key="3">
    <citation type="submission" date="2004-03" db="EMBL/GenBank/DDBJ databases">
        <title>Arabidopsis ORF clones.</title>
        <authorList>
            <person name="Cheuk R.F."/>
            <person name="Chen H."/>
            <person name="Kim C.J."/>
            <person name="Shinn P."/>
            <person name="Ecker J.R."/>
        </authorList>
    </citation>
    <scope>NUCLEOTIDE SEQUENCE [LARGE SCALE MRNA]</scope>
    <source>
        <strain>cv. Columbia</strain>
    </source>
</reference>
<reference key="4">
    <citation type="journal article" date="2004" name="Plant Cell">
        <title>Genome-wide analysis of Arabidopsis pentatricopeptide repeat proteins reveals their essential role in organelle biogenesis.</title>
        <authorList>
            <person name="Lurin C."/>
            <person name="Andres C."/>
            <person name="Aubourg S."/>
            <person name="Bellaoui M."/>
            <person name="Bitton F."/>
            <person name="Bruyere C."/>
            <person name="Caboche M."/>
            <person name="Debast C."/>
            <person name="Gualberto J."/>
            <person name="Hoffmann B."/>
            <person name="Lecharny A."/>
            <person name="Le Ret M."/>
            <person name="Martin-Magniette M.-L."/>
            <person name="Mireau H."/>
            <person name="Peeters N."/>
            <person name="Renou J.-P."/>
            <person name="Szurek B."/>
            <person name="Taconnat L."/>
            <person name="Small I."/>
        </authorList>
    </citation>
    <scope>GENE FAMILY</scope>
</reference>